<organism>
    <name type="scientific">Influenza A virus (strain A/Russia:St.Petersburg/8/2006 H1N1)</name>
    <dbReference type="NCBI Taxonomy" id="518998"/>
    <lineage>
        <taxon>Viruses</taxon>
        <taxon>Riboviria</taxon>
        <taxon>Orthornavirae</taxon>
        <taxon>Negarnaviricota</taxon>
        <taxon>Polyploviricotina</taxon>
        <taxon>Insthoviricetes</taxon>
        <taxon>Articulavirales</taxon>
        <taxon>Orthomyxoviridae</taxon>
        <taxon>Alphainfluenzavirus</taxon>
        <taxon>Alphainfluenzavirus influenzae</taxon>
        <taxon>Influenza A virus</taxon>
    </lineage>
</organism>
<reference key="1">
    <citation type="submission" date="2008-07" db="EMBL/GenBank/DDBJ databases">
        <title>The NIAID influenza genome sequencing project.</title>
        <authorList>
            <person name="Spiro D."/>
            <person name="Halpin R."/>
            <person name="Boyne A."/>
            <person name="Bera J."/>
            <person name="Ghedin E."/>
            <person name="Hostetler J."/>
            <person name="Fedorova N."/>
            <person name="Hine E."/>
            <person name="Overton L."/>
            <person name="Djuric K."/>
            <person name="Sarmiento M."/>
            <person name="Sitz J."/>
            <person name="Katzel D."/>
            <person name="Manojkumar R."/>
            <person name="Devis R."/>
            <person name="Fulvini A."/>
            <person name="Silverman J."/>
            <person name="Le J."/>
            <person name="Kilbourne E.D."/>
            <person name="Pokorny B."/>
            <person name="Bucher D."/>
            <person name="Orff E."/>
            <person name="Minieri J."/>
            <person name="Onodera S."/>
            <person name="Huang L."/>
            <person name="Bao Y."/>
            <person name="Sanders R."/>
            <person name="Dernovoy D."/>
            <person name="Kiryutin B."/>
            <person name="Lipman D.J."/>
            <person name="Tatusova T."/>
        </authorList>
    </citation>
    <scope>NUCLEOTIDE SEQUENCE [GENOMIC RNA]</scope>
</reference>
<reference key="2">
    <citation type="submission" date="2008-07" db="EMBL/GenBank/DDBJ databases">
        <authorList>
            <consortium name="The NIAID Influenza Genome Sequencing Consortium"/>
        </authorList>
    </citation>
    <scope>NUCLEOTIDE SEQUENCE [GENOMIC RNA]</scope>
</reference>
<comment type="function">
    <text evidence="1">Mediates the nuclear export of encapsidated genomic RNAs (ribonucleoproteins, RNPs). Acts as an adapter between viral RNPs complexes and the nuclear export machinery of the cell. Possesses no intrinsic RNA-binding activity, but includes a C-terminal M1-binding domain. This domain is believed to allow recognition of RNPs bound to the protein M1. Since protein M1 is not available in large quantities before late stages of infection, such an indirect recognition mechanism probably ensures that genomic RNPs are not exported from the host nucleus until sufficient quantities of viral mRNA and progeny genomic RNA have been synthesized. Furthermore, the RNPs enter the host cytoplasm only when associated with the M1 protein that is necessary to guide them to the plasma membrane. May down-regulate viral RNA synthesis when overproduced.</text>
</comment>
<comment type="subunit">
    <text evidence="1">Interacts with protein M1. May interact with host nucleoporin RAB/HRB and exportin XPO1/CRM1.</text>
</comment>
<comment type="subcellular location">
    <subcellularLocation>
        <location evidence="1">Virion</location>
    </subcellularLocation>
    <subcellularLocation>
        <location evidence="1">Host nucleus</location>
    </subcellularLocation>
</comment>
<comment type="alternative products">
    <event type="alternative splicing"/>
    <isoform>
        <id>B4URE1-1</id>
        <name>NEP</name>
        <name>NS2</name>
        <sequence type="displayed"/>
    </isoform>
    <isoform>
        <id>B4URE2-1</id>
        <name>NS1</name>
        <sequence type="external"/>
    </isoform>
</comment>
<comment type="miscellaneous">
    <text>Average number present in a viral particle is estimated to be 130-200 molecules.</text>
</comment>
<comment type="similarity">
    <text evidence="1">Belongs to the influenza viruses NEP family.</text>
</comment>
<sequence>MDPNTVSSFQDILLRMSKMQLESSSGDLNGMITQFESLKLYRDSLGEAVMRMGDLHSLQNRNEKWREQLGQKFEEIRWLIEEVRHKLKITENSFEQITFMQALHLLLEVEQEIRTFSFQLI</sequence>
<dbReference type="EMBL" id="CY034128">
    <property type="protein sequence ID" value="ACF54593.1"/>
    <property type="molecule type" value="Viral_cRNA"/>
</dbReference>
<dbReference type="SMR" id="B4URE1"/>
<dbReference type="Proteomes" id="UP000008081">
    <property type="component" value="Genome"/>
</dbReference>
<dbReference type="GO" id="GO:0042025">
    <property type="term" value="C:host cell nucleus"/>
    <property type="evidence" value="ECO:0007669"/>
    <property type="project" value="UniProtKB-SubCell"/>
</dbReference>
<dbReference type="GO" id="GO:0044423">
    <property type="term" value="C:virion component"/>
    <property type="evidence" value="ECO:0007669"/>
    <property type="project" value="UniProtKB-UniRule"/>
</dbReference>
<dbReference type="GO" id="GO:0039675">
    <property type="term" value="P:exit of virus from host cell nucleus through nuclear pore"/>
    <property type="evidence" value="ECO:0007669"/>
    <property type="project" value="UniProtKB-UniRule"/>
</dbReference>
<dbReference type="FunFam" id="1.10.287.230:FF:000001">
    <property type="entry name" value="Nuclear export protein"/>
    <property type="match status" value="1"/>
</dbReference>
<dbReference type="Gene3D" id="1.10.287.230">
    <property type="match status" value="1"/>
</dbReference>
<dbReference type="HAMAP" id="MF_04067">
    <property type="entry name" value="INFV_NEP"/>
    <property type="match status" value="1"/>
</dbReference>
<dbReference type="InterPro" id="IPR000968">
    <property type="entry name" value="Flu_NS2"/>
</dbReference>
<dbReference type="Pfam" id="PF00601">
    <property type="entry name" value="Flu_NS2"/>
    <property type="match status" value="1"/>
</dbReference>
<dbReference type="SUPFAM" id="SSF101156">
    <property type="entry name" value="Nonstructural protein ns2, Nep, M1-binding domain"/>
    <property type="match status" value="1"/>
</dbReference>
<proteinExistence type="inferred from homology"/>
<keyword id="KW-0025">Alternative splicing</keyword>
<keyword id="KW-1048">Host nucleus</keyword>
<keyword id="KW-0945">Host-virus interaction</keyword>
<keyword id="KW-0813">Transport</keyword>
<keyword id="KW-0946">Virion</keyword>
<protein>
    <recommendedName>
        <fullName evidence="1">Nuclear export protein</fullName>
        <shortName evidence="1">NEP</shortName>
    </recommendedName>
    <alternativeName>
        <fullName evidence="1">Non-structural protein 2</fullName>
        <shortName evidence="1">NS2</shortName>
    </alternativeName>
</protein>
<organismHost>
    <name type="scientific">Aves</name>
    <dbReference type="NCBI Taxonomy" id="8782"/>
</organismHost>
<organismHost>
    <name type="scientific">Homo sapiens</name>
    <name type="common">Human</name>
    <dbReference type="NCBI Taxonomy" id="9606"/>
</organismHost>
<organismHost>
    <name type="scientific">Sus scrofa</name>
    <name type="common">Pig</name>
    <dbReference type="NCBI Taxonomy" id="9823"/>
</organismHost>
<gene>
    <name evidence="1" type="primary">NS</name>
</gene>
<name>NEP_I06A0</name>
<feature type="chain" id="PRO_0000372946" description="Nuclear export protein">
    <location>
        <begin position="1"/>
        <end position="121"/>
    </location>
</feature>
<feature type="short sequence motif" description="Nuclear export signal" evidence="1">
    <location>
        <begin position="12"/>
        <end position="21"/>
    </location>
</feature>
<feature type="short sequence motif" description="Nuclear export signal" evidence="1">
    <location>
        <begin position="85"/>
        <end position="94"/>
    </location>
</feature>
<evidence type="ECO:0000255" key="1">
    <source>
        <dbReference type="HAMAP-Rule" id="MF_04067"/>
    </source>
</evidence>
<accession>B4URE1</accession>